<evidence type="ECO:0000255" key="1">
    <source>
        <dbReference type="HAMAP-Rule" id="MF_00089"/>
    </source>
</evidence>
<protein>
    <recommendedName>
        <fullName evidence="1">Phosphomethylpyrimidine synthase</fullName>
        <ecNumber evidence="1">4.1.99.17</ecNumber>
    </recommendedName>
    <alternativeName>
        <fullName evidence="1">Hydroxymethylpyrimidine phosphate synthase</fullName>
        <shortName evidence="1">HMP-P synthase</shortName>
        <shortName evidence="1">HMP-phosphate synthase</shortName>
        <shortName evidence="1">HMPP synthase</shortName>
    </alternativeName>
    <alternativeName>
        <fullName evidence="1">Thiamine biosynthesis protein ThiC</fullName>
    </alternativeName>
</protein>
<keyword id="KW-0004">4Fe-4S</keyword>
<keyword id="KW-0408">Iron</keyword>
<keyword id="KW-0411">Iron-sulfur</keyword>
<keyword id="KW-0456">Lyase</keyword>
<keyword id="KW-0479">Metal-binding</keyword>
<keyword id="KW-0949">S-adenosyl-L-methionine</keyword>
<keyword id="KW-0784">Thiamine biosynthesis</keyword>
<keyword id="KW-0862">Zinc</keyword>
<organism>
    <name type="scientific">Burkholderia mallei (strain NCTC 10247)</name>
    <dbReference type="NCBI Taxonomy" id="320389"/>
    <lineage>
        <taxon>Bacteria</taxon>
        <taxon>Pseudomonadati</taxon>
        <taxon>Pseudomonadota</taxon>
        <taxon>Betaproteobacteria</taxon>
        <taxon>Burkholderiales</taxon>
        <taxon>Burkholderiaceae</taxon>
        <taxon>Burkholderia</taxon>
        <taxon>pseudomallei group</taxon>
    </lineage>
</organism>
<name>THIC_BURM7</name>
<dbReference type="EC" id="4.1.99.17" evidence="1"/>
<dbReference type="EMBL" id="CP000548">
    <property type="protein sequence ID" value="ABO06415.1"/>
    <property type="molecule type" value="Genomic_DNA"/>
</dbReference>
<dbReference type="RefSeq" id="WP_004193963.1">
    <property type="nucleotide sequence ID" value="NZ_CP007802.1"/>
</dbReference>
<dbReference type="SMR" id="A3MIG6"/>
<dbReference type="GeneID" id="92980758"/>
<dbReference type="KEGG" id="bmaz:BM44_2535"/>
<dbReference type="KEGG" id="bmn:BMA10247_0482"/>
<dbReference type="PATRIC" id="fig|320389.8.peg.2866"/>
<dbReference type="UniPathway" id="UPA00060"/>
<dbReference type="GO" id="GO:0005829">
    <property type="term" value="C:cytosol"/>
    <property type="evidence" value="ECO:0007669"/>
    <property type="project" value="TreeGrafter"/>
</dbReference>
<dbReference type="GO" id="GO:0051539">
    <property type="term" value="F:4 iron, 4 sulfur cluster binding"/>
    <property type="evidence" value="ECO:0007669"/>
    <property type="project" value="UniProtKB-KW"/>
</dbReference>
<dbReference type="GO" id="GO:0016830">
    <property type="term" value="F:carbon-carbon lyase activity"/>
    <property type="evidence" value="ECO:0007669"/>
    <property type="project" value="InterPro"/>
</dbReference>
<dbReference type="GO" id="GO:0008270">
    <property type="term" value="F:zinc ion binding"/>
    <property type="evidence" value="ECO:0007669"/>
    <property type="project" value="UniProtKB-UniRule"/>
</dbReference>
<dbReference type="GO" id="GO:0009228">
    <property type="term" value="P:thiamine biosynthetic process"/>
    <property type="evidence" value="ECO:0007669"/>
    <property type="project" value="UniProtKB-KW"/>
</dbReference>
<dbReference type="GO" id="GO:0009229">
    <property type="term" value="P:thiamine diphosphate biosynthetic process"/>
    <property type="evidence" value="ECO:0007669"/>
    <property type="project" value="UniProtKB-UniRule"/>
</dbReference>
<dbReference type="FunFam" id="3.20.20.540:FF:000001">
    <property type="entry name" value="Phosphomethylpyrimidine synthase"/>
    <property type="match status" value="1"/>
</dbReference>
<dbReference type="Gene3D" id="6.10.250.620">
    <property type="match status" value="1"/>
</dbReference>
<dbReference type="Gene3D" id="3.20.20.540">
    <property type="entry name" value="Radical SAM ThiC family, central domain"/>
    <property type="match status" value="1"/>
</dbReference>
<dbReference type="HAMAP" id="MF_00089">
    <property type="entry name" value="ThiC"/>
    <property type="match status" value="1"/>
</dbReference>
<dbReference type="InterPro" id="IPR037509">
    <property type="entry name" value="ThiC"/>
</dbReference>
<dbReference type="InterPro" id="IPR025747">
    <property type="entry name" value="ThiC-associated_dom"/>
</dbReference>
<dbReference type="InterPro" id="IPR038521">
    <property type="entry name" value="ThiC/Bza_core_dom"/>
</dbReference>
<dbReference type="InterPro" id="IPR002817">
    <property type="entry name" value="ThiC/BzaA/B"/>
</dbReference>
<dbReference type="NCBIfam" id="NF006763">
    <property type="entry name" value="PRK09284.1"/>
    <property type="match status" value="1"/>
</dbReference>
<dbReference type="NCBIfam" id="NF009895">
    <property type="entry name" value="PRK13352.1"/>
    <property type="match status" value="1"/>
</dbReference>
<dbReference type="NCBIfam" id="TIGR00190">
    <property type="entry name" value="thiC"/>
    <property type="match status" value="1"/>
</dbReference>
<dbReference type="PANTHER" id="PTHR30557:SF1">
    <property type="entry name" value="PHOSPHOMETHYLPYRIMIDINE SYNTHASE, CHLOROPLASTIC"/>
    <property type="match status" value="1"/>
</dbReference>
<dbReference type="PANTHER" id="PTHR30557">
    <property type="entry name" value="THIAMINE BIOSYNTHESIS PROTEIN THIC"/>
    <property type="match status" value="1"/>
</dbReference>
<dbReference type="Pfam" id="PF13667">
    <property type="entry name" value="ThiC-associated"/>
    <property type="match status" value="1"/>
</dbReference>
<dbReference type="Pfam" id="PF01964">
    <property type="entry name" value="ThiC_Rad_SAM"/>
    <property type="match status" value="1"/>
</dbReference>
<dbReference type="SFLD" id="SFLDF00407">
    <property type="entry name" value="phosphomethylpyrimidine_syntha"/>
    <property type="match status" value="1"/>
</dbReference>
<dbReference type="SFLD" id="SFLDG01114">
    <property type="entry name" value="phosphomethylpyrimidine_syntha"/>
    <property type="match status" value="1"/>
</dbReference>
<dbReference type="SFLD" id="SFLDS00113">
    <property type="entry name" value="Radical_SAM_Phosphomethylpyrim"/>
    <property type="match status" value="1"/>
</dbReference>
<proteinExistence type="inferred from homology"/>
<accession>A3MIG6</accession>
<comment type="function">
    <text evidence="1">Catalyzes the synthesis of the hydroxymethylpyrimidine phosphate (HMP-P) moiety of thiamine from aminoimidazole ribotide (AIR) in a radical S-adenosyl-L-methionine (SAM)-dependent reaction.</text>
</comment>
<comment type="catalytic activity">
    <reaction evidence="1">
        <text>5-amino-1-(5-phospho-beta-D-ribosyl)imidazole + S-adenosyl-L-methionine = 4-amino-2-methyl-5-(phosphooxymethyl)pyrimidine + CO + 5'-deoxyadenosine + formate + L-methionine + 3 H(+)</text>
        <dbReference type="Rhea" id="RHEA:24840"/>
        <dbReference type="ChEBI" id="CHEBI:15378"/>
        <dbReference type="ChEBI" id="CHEBI:15740"/>
        <dbReference type="ChEBI" id="CHEBI:17245"/>
        <dbReference type="ChEBI" id="CHEBI:17319"/>
        <dbReference type="ChEBI" id="CHEBI:57844"/>
        <dbReference type="ChEBI" id="CHEBI:58354"/>
        <dbReference type="ChEBI" id="CHEBI:59789"/>
        <dbReference type="ChEBI" id="CHEBI:137981"/>
        <dbReference type="EC" id="4.1.99.17"/>
    </reaction>
</comment>
<comment type="cofactor">
    <cofactor evidence="1">
        <name>[4Fe-4S] cluster</name>
        <dbReference type="ChEBI" id="CHEBI:49883"/>
    </cofactor>
    <text evidence="1">Binds 1 [4Fe-4S] cluster per subunit. The cluster is coordinated with 3 cysteines and an exchangeable S-adenosyl-L-methionine.</text>
</comment>
<comment type="pathway">
    <text evidence="1">Cofactor biosynthesis; thiamine diphosphate biosynthesis.</text>
</comment>
<comment type="subunit">
    <text evidence="1">Homodimer.</text>
</comment>
<comment type="similarity">
    <text evidence="1">Belongs to the ThiC family.</text>
</comment>
<feature type="chain" id="PRO_1000004741" description="Phosphomethylpyrimidine synthase">
    <location>
        <begin position="1"/>
        <end position="643"/>
    </location>
</feature>
<feature type="binding site" evidence="1">
    <location>
        <position position="248"/>
    </location>
    <ligand>
        <name>substrate</name>
    </ligand>
</feature>
<feature type="binding site" evidence="1">
    <location>
        <position position="277"/>
    </location>
    <ligand>
        <name>substrate</name>
    </ligand>
</feature>
<feature type="binding site" evidence="1">
    <location>
        <position position="306"/>
    </location>
    <ligand>
        <name>substrate</name>
    </ligand>
</feature>
<feature type="binding site" evidence="1">
    <location>
        <position position="342"/>
    </location>
    <ligand>
        <name>substrate</name>
    </ligand>
</feature>
<feature type="binding site" evidence="1">
    <location>
        <begin position="362"/>
        <end position="364"/>
    </location>
    <ligand>
        <name>substrate</name>
    </ligand>
</feature>
<feature type="binding site" evidence="1">
    <location>
        <begin position="403"/>
        <end position="406"/>
    </location>
    <ligand>
        <name>substrate</name>
    </ligand>
</feature>
<feature type="binding site" evidence="1">
    <location>
        <position position="442"/>
    </location>
    <ligand>
        <name>substrate</name>
    </ligand>
</feature>
<feature type="binding site" evidence="1">
    <location>
        <position position="446"/>
    </location>
    <ligand>
        <name>Zn(2+)</name>
        <dbReference type="ChEBI" id="CHEBI:29105"/>
    </ligand>
</feature>
<feature type="binding site" evidence="1">
    <location>
        <position position="469"/>
    </location>
    <ligand>
        <name>substrate</name>
    </ligand>
</feature>
<feature type="binding site" evidence="1">
    <location>
        <position position="510"/>
    </location>
    <ligand>
        <name>Zn(2+)</name>
        <dbReference type="ChEBI" id="CHEBI:29105"/>
    </ligand>
</feature>
<feature type="binding site" evidence="1">
    <location>
        <position position="590"/>
    </location>
    <ligand>
        <name>[4Fe-4S] cluster</name>
        <dbReference type="ChEBI" id="CHEBI:49883"/>
        <note>4Fe-4S-S-AdoMet</note>
    </ligand>
</feature>
<feature type="binding site" evidence="1">
    <location>
        <position position="593"/>
    </location>
    <ligand>
        <name>[4Fe-4S] cluster</name>
        <dbReference type="ChEBI" id="CHEBI:49883"/>
        <note>4Fe-4S-S-AdoMet</note>
    </ligand>
</feature>
<feature type="binding site" evidence="1">
    <location>
        <position position="598"/>
    </location>
    <ligand>
        <name>[4Fe-4S] cluster</name>
        <dbReference type="ChEBI" id="CHEBI:49883"/>
        <note>4Fe-4S-S-AdoMet</note>
    </ligand>
</feature>
<reference key="1">
    <citation type="journal article" date="2010" name="Genome Biol. Evol.">
        <title>Continuing evolution of Burkholderia mallei through genome reduction and large-scale rearrangements.</title>
        <authorList>
            <person name="Losada L."/>
            <person name="Ronning C.M."/>
            <person name="DeShazer D."/>
            <person name="Woods D."/>
            <person name="Fedorova N."/>
            <person name="Kim H.S."/>
            <person name="Shabalina S.A."/>
            <person name="Pearson T.R."/>
            <person name="Brinkac L."/>
            <person name="Tan P."/>
            <person name="Nandi T."/>
            <person name="Crabtree J."/>
            <person name="Badger J."/>
            <person name="Beckstrom-Sternberg S."/>
            <person name="Saqib M."/>
            <person name="Schutzer S.E."/>
            <person name="Keim P."/>
            <person name="Nierman W.C."/>
        </authorList>
    </citation>
    <scope>NUCLEOTIDE SEQUENCE [LARGE SCALE GENOMIC DNA]</scope>
    <source>
        <strain>NCTC 10247</strain>
    </source>
</reference>
<sequence>MNANPKFLSADARVDAAAVAPLPNSRKVYVTGSQPDIRVPMREITQADTPTSFGGEKNPPIYVYDTSGPYTDPDAKIDIRAGLPALRQRWIDARGDTETLSGLTSDYGRERAADPATAELRFPGLHRHPRRAKAGKNVTQMHYARQGIITPEMEYIAIRENQRRAEYLESLKASGPNGAKLAAMMGRQHAGQAFGAAAFGANAPAEITPEFVRDEVARGRAIIPANINHPETEPMIIGRNFLVKINANIGNSAVTSSIGEEVDKMTWAIRWGGDTVMDLSTGKHIHETREWIIRNSPVPIGTVPIYQALEKVNGKAEDLTWEIFRDTLIEQAEQGVDYFTIHAGVRLQYVPLTANRMTGIVSRGGSIMAKWCLAHHKESFLYEHFEEICEIMKAYDVSFSLGDGLRPGSIYDANDEAQLGELKTLGELTQIAWKHDVQVMIEGPGHVPMQLIKENMDLQLDWCKEAPFYTLGPLTTDIAPGYDHITSGIGAAMIGWFGTAMLCYVTPKEHLGLPNKDDVKEGIITYKLAAHAADLAKGHPGAQVRDNALSKARFEFRWQDQFNLGLDPDKAREFHDETLPKDSAKVAHFCSMCGPHFCSMKITQDVREFAAQQGVSENDALKKGMEVKAVEFVKSGSEIYHRQ</sequence>
<gene>
    <name evidence="1" type="primary">thiC</name>
    <name type="ordered locus">BMA10247_0482</name>
</gene>